<gene>
    <name type="primary">hssl62</name>
    <name type="ORF">DDB_G0293356</name>
</gene>
<dbReference type="EMBL" id="AAFI02000203">
    <property type="protein sequence ID" value="EAL60767.1"/>
    <property type="molecule type" value="Genomic_DNA"/>
</dbReference>
<dbReference type="RefSeq" id="XP_629180.1">
    <property type="nucleotide sequence ID" value="XM_629178.1"/>
</dbReference>
<dbReference type="FunCoup" id="Q54BX6">
    <property type="interactions" value="243"/>
</dbReference>
<dbReference type="PaxDb" id="44689-DDB0231105"/>
<dbReference type="EnsemblProtists" id="EAL60767">
    <property type="protein sequence ID" value="EAL60767"/>
    <property type="gene ID" value="DDB_G0293356"/>
</dbReference>
<dbReference type="GeneID" id="8629179"/>
<dbReference type="KEGG" id="ddi:DDB_G0293356"/>
<dbReference type="dictyBase" id="DDB_G0293356"/>
<dbReference type="VEuPathDB" id="AmoebaDB:DDB_G0293356"/>
<dbReference type="HOGENOM" id="CLU_181850_1_0_1"/>
<dbReference type="InParanoid" id="Q54BX6"/>
<dbReference type="PRO" id="PR:Q54BX6"/>
<dbReference type="Proteomes" id="UP000002195">
    <property type="component" value="Chromosome 6"/>
</dbReference>
<dbReference type="GO" id="GO:0030587">
    <property type="term" value="P:sorocarp development"/>
    <property type="evidence" value="ECO:0000318"/>
    <property type="project" value="GO_Central"/>
</dbReference>
<dbReference type="InterPro" id="IPR050533">
    <property type="entry name" value="HssA/B-like_chaperone"/>
</dbReference>
<dbReference type="InterPro" id="IPR008455">
    <property type="entry name" value="HssA/B-related"/>
</dbReference>
<dbReference type="PANTHER" id="PTHR31059">
    <property type="entry name" value="HSSA/B-LIKE PROTEIN 1-RELATED-RELATED"/>
    <property type="match status" value="1"/>
</dbReference>
<dbReference type="PANTHER" id="PTHR31059:SF5">
    <property type="entry name" value="HSSA_B-LIKE PROTEIN 1-RELATED"/>
    <property type="match status" value="1"/>
</dbReference>
<dbReference type="Pfam" id="PF05710">
    <property type="entry name" value="Coiled"/>
    <property type="match status" value="1"/>
</dbReference>
<keyword id="KW-1185">Reference proteome</keyword>
<accession>Q54BX6</accession>
<comment type="similarity">
    <text evidence="1">Belongs to the hssA/B family.</text>
</comment>
<organism>
    <name type="scientific">Dictyostelium discoideum</name>
    <name type="common">Social amoeba</name>
    <dbReference type="NCBI Taxonomy" id="44689"/>
    <lineage>
        <taxon>Eukaryota</taxon>
        <taxon>Amoebozoa</taxon>
        <taxon>Evosea</taxon>
        <taxon>Eumycetozoa</taxon>
        <taxon>Dictyostelia</taxon>
        <taxon>Dictyosteliales</taxon>
        <taxon>Dictyosteliaceae</taxon>
        <taxon>Dictyostelium</taxon>
    </lineage>
</organism>
<evidence type="ECO:0000305" key="1"/>
<protein>
    <recommendedName>
        <fullName>HssA/B-like protein 62</fullName>
    </recommendedName>
</protein>
<proteinExistence type="inferred from homology"/>
<reference key="1">
    <citation type="journal article" date="2005" name="Nature">
        <title>The genome of the social amoeba Dictyostelium discoideum.</title>
        <authorList>
            <person name="Eichinger L."/>
            <person name="Pachebat J.A."/>
            <person name="Gloeckner G."/>
            <person name="Rajandream M.A."/>
            <person name="Sucgang R."/>
            <person name="Berriman M."/>
            <person name="Song J."/>
            <person name="Olsen R."/>
            <person name="Szafranski K."/>
            <person name="Xu Q."/>
            <person name="Tunggal B."/>
            <person name="Kummerfeld S."/>
            <person name="Madera M."/>
            <person name="Konfortov B.A."/>
            <person name="Rivero F."/>
            <person name="Bankier A.T."/>
            <person name="Lehmann R."/>
            <person name="Hamlin N."/>
            <person name="Davies R."/>
            <person name="Gaudet P."/>
            <person name="Fey P."/>
            <person name="Pilcher K."/>
            <person name="Chen G."/>
            <person name="Saunders D."/>
            <person name="Sodergren E.J."/>
            <person name="Davis P."/>
            <person name="Kerhornou A."/>
            <person name="Nie X."/>
            <person name="Hall N."/>
            <person name="Anjard C."/>
            <person name="Hemphill L."/>
            <person name="Bason N."/>
            <person name="Farbrother P."/>
            <person name="Desany B."/>
            <person name="Just E."/>
            <person name="Morio T."/>
            <person name="Rost R."/>
            <person name="Churcher C.M."/>
            <person name="Cooper J."/>
            <person name="Haydock S."/>
            <person name="van Driessche N."/>
            <person name="Cronin A."/>
            <person name="Goodhead I."/>
            <person name="Muzny D.M."/>
            <person name="Mourier T."/>
            <person name="Pain A."/>
            <person name="Lu M."/>
            <person name="Harper D."/>
            <person name="Lindsay R."/>
            <person name="Hauser H."/>
            <person name="James K.D."/>
            <person name="Quiles M."/>
            <person name="Madan Babu M."/>
            <person name="Saito T."/>
            <person name="Buchrieser C."/>
            <person name="Wardroper A."/>
            <person name="Felder M."/>
            <person name="Thangavelu M."/>
            <person name="Johnson D."/>
            <person name="Knights A."/>
            <person name="Loulseged H."/>
            <person name="Mungall K.L."/>
            <person name="Oliver K."/>
            <person name="Price C."/>
            <person name="Quail M.A."/>
            <person name="Urushihara H."/>
            <person name="Hernandez J."/>
            <person name="Rabbinowitsch E."/>
            <person name="Steffen D."/>
            <person name="Sanders M."/>
            <person name="Ma J."/>
            <person name="Kohara Y."/>
            <person name="Sharp S."/>
            <person name="Simmonds M.N."/>
            <person name="Spiegler S."/>
            <person name="Tivey A."/>
            <person name="Sugano S."/>
            <person name="White B."/>
            <person name="Walker D."/>
            <person name="Woodward J.R."/>
            <person name="Winckler T."/>
            <person name="Tanaka Y."/>
            <person name="Shaulsky G."/>
            <person name="Schleicher M."/>
            <person name="Weinstock G.M."/>
            <person name="Rosenthal A."/>
            <person name="Cox E.C."/>
            <person name="Chisholm R.L."/>
            <person name="Gibbs R.A."/>
            <person name="Loomis W.F."/>
            <person name="Platzer M."/>
            <person name="Kay R.R."/>
            <person name="Williams J.G."/>
            <person name="Dear P.H."/>
            <person name="Noegel A.A."/>
            <person name="Barrell B.G."/>
            <person name="Kuspa A."/>
        </authorList>
    </citation>
    <scope>NUCLEOTIDE SEQUENCE [LARGE SCALE GENOMIC DNA]</scope>
    <source>
        <strain>AX4</strain>
    </source>
</reference>
<feature type="chain" id="PRO_0000330430" description="HssA/B-like protein 62">
    <location>
        <begin position="1"/>
        <end position="85"/>
    </location>
</feature>
<name>HSL62_DICDI</name>
<sequence>MTILSAITSISRPNKISKSVVSSNGGASLSMGSNSVACGGCGGGSSVLIAAGGSGGLFVGAAVAVDLSIHASVGIAIGSTSCHCN</sequence>